<organism>
    <name type="scientific">Bos taurus</name>
    <name type="common">Bovine</name>
    <dbReference type="NCBI Taxonomy" id="9913"/>
    <lineage>
        <taxon>Eukaryota</taxon>
        <taxon>Metazoa</taxon>
        <taxon>Chordata</taxon>
        <taxon>Craniata</taxon>
        <taxon>Vertebrata</taxon>
        <taxon>Euteleostomi</taxon>
        <taxon>Mammalia</taxon>
        <taxon>Eutheria</taxon>
        <taxon>Laurasiatheria</taxon>
        <taxon>Artiodactyla</taxon>
        <taxon>Ruminantia</taxon>
        <taxon>Pecora</taxon>
        <taxon>Bovidae</taxon>
        <taxon>Bovinae</taxon>
        <taxon>Bos</taxon>
    </lineage>
</organism>
<comment type="function">
    <text evidence="1">Acts as a co-chaperone with HSPA8/Hsc70; required to promote protein folding and trafficking, prevent aggregation of client proteins, and promote unfolded proteins to endoplasmic reticulum-associated degradation (ERAD) pathway. Acts by determining HSPA8/Hsc70's ATPase and polypeptide-binding activities. Can also act independently of HSPA8/Hsc70: together with DNAJB12, acts as a chaperone that promotes maturation of potassium channels KCND2 and KCNH2 by stabilizing nascent channel subunits and assembling them into tetramers. While stabilization of nascent channel proteins is dependent on HSPA8/Hsc70, the process of oligomerization of channel subunits is independent of HSPA8/Hsc70. When overexpressed, forms membranous structures together with DNAJB12 and HSPA8/Hsc70 within the nucleus; the role of these structures, named DJANGOs, is still unclear.</text>
</comment>
<comment type="subunit">
    <text evidence="1">Interacts (via J domain) with HSPA8/Hsc70. Forms a multiprotein complex, at least composed of DNAJB12, DNAJB14, HSPA8/Hsc70 and SGTA; interaction with DNAJB14 and HSPA8/Hsc70 is direct.</text>
</comment>
<comment type="subcellular location">
    <subcellularLocation>
        <location evidence="1">Endoplasmic reticulum membrane</location>
        <topology evidence="2">Single-pass membrane protein</topology>
    </subcellularLocation>
    <subcellularLocation>
        <location evidence="1">Nucleus membrane</location>
        <topology evidence="2">Single-pass membrane protein</topology>
    </subcellularLocation>
    <text evidence="1">Localizes to the endoplasmic reticulum membrane. When overexpressed, forms membranous structures in the nucleus.</text>
</comment>
<comment type="similarity">
    <text evidence="5">Belongs to the DnaJ family. DNAJB12/DNAJB14 subfamily.</text>
</comment>
<name>DJB14_BOVIN</name>
<reference key="1">
    <citation type="submission" date="2006-08" db="EMBL/GenBank/DDBJ databases">
        <authorList>
            <consortium name="NIH - Mammalian Gene Collection (MGC) project"/>
        </authorList>
    </citation>
    <scope>NUCLEOTIDE SEQUENCE [LARGE SCALE MRNA]</scope>
    <source>
        <strain>Hereford</strain>
        <tissue>Ascending colon</tissue>
    </source>
</reference>
<accession>Q0IIE8</accession>
<gene>
    <name type="primary">DNAJB14</name>
</gene>
<protein>
    <recommendedName>
        <fullName>DnaJ homolog subfamily B member 14</fullName>
    </recommendedName>
</protein>
<sequence>MEGNRDEAEKCVEIAREALNAGNREKAQRFLQKAEKLYPLPSARALLEIIMKNGSTAGNSPHCRKPSGGGDQSKPNCTKDSSSGSGESGKGYTKDQVDGVLSINKCKNYYEVLGVTKDAGDEDLKKAYRKLALKFHPDKNHAPGATDAFKKIGNAYAVLSNPEKRKQYDLTGNEEQACNQQNNGRFNFHRGCEADITPEDLFNIFFGGGFPSGSVHSFSNGRAGYSNQHQHRHSGHEREEERGDGGFSVFIQLMPIIVLILVSLLSQLMVSNPPYSLYPRSGSGQTIKMQTENLGVIYYVNKDFKNEYKGMLLQKVEKSVEEDYVTNIRNNCWKERQQKTDMQYAAKVYHDERLRRKAEALSMDNCKELERLTSIYKGG</sequence>
<evidence type="ECO:0000250" key="1">
    <source>
        <dbReference type="UniProtKB" id="Q8TBM8"/>
    </source>
</evidence>
<evidence type="ECO:0000255" key="2"/>
<evidence type="ECO:0000255" key="3">
    <source>
        <dbReference type="PROSITE-ProRule" id="PRU00286"/>
    </source>
</evidence>
<evidence type="ECO:0000256" key="4">
    <source>
        <dbReference type="SAM" id="MobiDB-lite"/>
    </source>
</evidence>
<evidence type="ECO:0000305" key="5"/>
<keyword id="KW-0143">Chaperone</keyword>
<keyword id="KW-0256">Endoplasmic reticulum</keyword>
<keyword id="KW-0472">Membrane</keyword>
<keyword id="KW-0539">Nucleus</keyword>
<keyword id="KW-1185">Reference proteome</keyword>
<keyword id="KW-0812">Transmembrane</keyword>
<keyword id="KW-1133">Transmembrane helix</keyword>
<proteinExistence type="evidence at transcript level"/>
<dbReference type="EMBL" id="BC122680">
    <property type="protein sequence ID" value="AAI22681.1"/>
    <property type="molecule type" value="mRNA"/>
</dbReference>
<dbReference type="RefSeq" id="NP_001069599.1">
    <property type="nucleotide sequence ID" value="NM_001076131.1"/>
</dbReference>
<dbReference type="RefSeq" id="XP_010804251.1">
    <property type="nucleotide sequence ID" value="XM_010805949.2"/>
</dbReference>
<dbReference type="SMR" id="Q0IIE8"/>
<dbReference type="FunCoup" id="Q0IIE8">
    <property type="interactions" value="4486"/>
</dbReference>
<dbReference type="STRING" id="9913.ENSBTAP00000058072"/>
<dbReference type="PaxDb" id="9913-ENSBTAP00000005799"/>
<dbReference type="Ensembl" id="ENSBTAT00000005799.5">
    <property type="protein sequence ID" value="ENSBTAP00000005799.4"/>
    <property type="gene ID" value="ENSBTAG00000004426.7"/>
</dbReference>
<dbReference type="GeneID" id="538849"/>
<dbReference type="KEGG" id="bta:538849"/>
<dbReference type="CTD" id="79982"/>
<dbReference type="VEuPathDB" id="HostDB:ENSBTAG00000004426"/>
<dbReference type="VGNC" id="VGNC:53699">
    <property type="gene designation" value="DNAJB14"/>
</dbReference>
<dbReference type="eggNOG" id="KOG0714">
    <property type="taxonomic scope" value="Eukaryota"/>
</dbReference>
<dbReference type="GeneTree" id="ENSGT00940000157887"/>
<dbReference type="HOGENOM" id="CLU_043579_3_0_1"/>
<dbReference type="InParanoid" id="Q0IIE8"/>
<dbReference type="OMA" id="DDRMRKK"/>
<dbReference type="OrthoDB" id="442087at2759"/>
<dbReference type="TreeFam" id="TF105145"/>
<dbReference type="Proteomes" id="UP000009136">
    <property type="component" value="Chromosome 6"/>
</dbReference>
<dbReference type="Bgee" id="ENSBTAG00000004426">
    <property type="expression patterns" value="Expressed in conceptus and 109 other cell types or tissues"/>
</dbReference>
<dbReference type="GO" id="GO:0005783">
    <property type="term" value="C:endoplasmic reticulum"/>
    <property type="evidence" value="ECO:0000250"/>
    <property type="project" value="UniProtKB"/>
</dbReference>
<dbReference type="GO" id="GO:0005789">
    <property type="term" value="C:endoplasmic reticulum membrane"/>
    <property type="evidence" value="ECO:0000318"/>
    <property type="project" value="GO_Central"/>
</dbReference>
<dbReference type="GO" id="GO:0031965">
    <property type="term" value="C:nuclear membrane"/>
    <property type="evidence" value="ECO:0007669"/>
    <property type="project" value="UniProtKB-SubCell"/>
</dbReference>
<dbReference type="GO" id="GO:0030544">
    <property type="term" value="F:Hsp70 protein binding"/>
    <property type="evidence" value="ECO:0000318"/>
    <property type="project" value="GO_Central"/>
</dbReference>
<dbReference type="GO" id="GO:0071218">
    <property type="term" value="P:cellular response to misfolded protein"/>
    <property type="evidence" value="ECO:0000318"/>
    <property type="project" value="GO_Central"/>
</dbReference>
<dbReference type="GO" id="GO:0051085">
    <property type="term" value="P:chaperone cofactor-dependent protein refolding"/>
    <property type="evidence" value="ECO:0000250"/>
    <property type="project" value="UniProtKB"/>
</dbReference>
<dbReference type="GO" id="GO:0065003">
    <property type="term" value="P:protein-containing complex assembly"/>
    <property type="evidence" value="ECO:0000250"/>
    <property type="project" value="UniProtKB"/>
</dbReference>
<dbReference type="CDD" id="cd06257">
    <property type="entry name" value="DnaJ"/>
    <property type="match status" value="1"/>
</dbReference>
<dbReference type="FunFam" id="1.10.287.110:FF:000004">
    <property type="entry name" value="DnaJ (Hsp40) homolog, subfamily B, member 14"/>
    <property type="match status" value="1"/>
</dbReference>
<dbReference type="Gene3D" id="1.10.287.110">
    <property type="entry name" value="DnaJ domain"/>
    <property type="match status" value="1"/>
</dbReference>
<dbReference type="InterPro" id="IPR001623">
    <property type="entry name" value="DnaJ_domain"/>
</dbReference>
<dbReference type="InterPro" id="IPR018253">
    <property type="entry name" value="DnaJ_domain_CS"/>
</dbReference>
<dbReference type="InterPro" id="IPR051100">
    <property type="entry name" value="DnaJ_subfamily_B/C"/>
</dbReference>
<dbReference type="InterPro" id="IPR015399">
    <property type="entry name" value="DUF1977_DnaJ-like"/>
</dbReference>
<dbReference type="InterPro" id="IPR036869">
    <property type="entry name" value="J_dom_sf"/>
</dbReference>
<dbReference type="PANTHER" id="PTHR43908">
    <property type="entry name" value="AT29763P-RELATED"/>
    <property type="match status" value="1"/>
</dbReference>
<dbReference type="PANTHER" id="PTHR43908:SF4">
    <property type="entry name" value="DNAJ HOMOLOG SUBFAMILY B MEMBER 14"/>
    <property type="match status" value="1"/>
</dbReference>
<dbReference type="Pfam" id="PF00226">
    <property type="entry name" value="DnaJ"/>
    <property type="match status" value="1"/>
</dbReference>
<dbReference type="Pfam" id="PF09320">
    <property type="entry name" value="DUF1977"/>
    <property type="match status" value="1"/>
</dbReference>
<dbReference type="PRINTS" id="PR00625">
    <property type="entry name" value="JDOMAIN"/>
</dbReference>
<dbReference type="SMART" id="SM00271">
    <property type="entry name" value="DnaJ"/>
    <property type="match status" value="1"/>
</dbReference>
<dbReference type="SUPFAM" id="SSF46565">
    <property type="entry name" value="Chaperone J-domain"/>
    <property type="match status" value="1"/>
</dbReference>
<dbReference type="PROSITE" id="PS00636">
    <property type="entry name" value="DNAJ_1"/>
    <property type="match status" value="1"/>
</dbReference>
<dbReference type="PROSITE" id="PS50076">
    <property type="entry name" value="DNAJ_2"/>
    <property type="match status" value="1"/>
</dbReference>
<feature type="chain" id="PRO_0000281477" description="DnaJ homolog subfamily B member 14">
    <location>
        <begin position="1"/>
        <end position="379"/>
    </location>
</feature>
<feature type="topological domain" description="Cytoplasmic" evidence="2">
    <location>
        <begin position="1"/>
        <end position="244"/>
    </location>
</feature>
<feature type="transmembrane region" description="Helical" evidence="2">
    <location>
        <begin position="245"/>
        <end position="265"/>
    </location>
</feature>
<feature type="topological domain" description="Lumenal" evidence="2">
    <location>
        <begin position="266"/>
        <end position="379"/>
    </location>
</feature>
<feature type="domain" description="J" evidence="3">
    <location>
        <begin position="108"/>
        <end position="172"/>
    </location>
</feature>
<feature type="region of interest" description="Disordered" evidence="4">
    <location>
        <begin position="55"/>
        <end position="94"/>
    </location>
</feature>
<feature type="region of interest" description="Disordered" evidence="4">
    <location>
        <begin position="221"/>
        <end position="241"/>
    </location>
</feature>